<organism>
    <name type="scientific">Rattus norvegicus</name>
    <name type="common">Rat</name>
    <dbReference type="NCBI Taxonomy" id="10116"/>
    <lineage>
        <taxon>Eukaryota</taxon>
        <taxon>Metazoa</taxon>
        <taxon>Chordata</taxon>
        <taxon>Craniata</taxon>
        <taxon>Vertebrata</taxon>
        <taxon>Euteleostomi</taxon>
        <taxon>Mammalia</taxon>
        <taxon>Eutheria</taxon>
        <taxon>Euarchontoglires</taxon>
        <taxon>Glires</taxon>
        <taxon>Rodentia</taxon>
        <taxon>Myomorpha</taxon>
        <taxon>Muroidea</taxon>
        <taxon>Muridae</taxon>
        <taxon>Murinae</taxon>
        <taxon>Rattus</taxon>
    </lineage>
</organism>
<feature type="transit peptide" description="Mitochondrion" evidence="6 7">
    <location>
        <begin position="1"/>
        <end position="35"/>
    </location>
</feature>
<feature type="chain" id="PRO_0000056567" description="Succinate-semialdehyde dehydrogenase, mitochondrial">
    <location>
        <begin position="36"/>
        <end position="523"/>
    </location>
</feature>
<feature type="active site" description="Proton acceptor" evidence="4 5">
    <location>
        <position position="294"/>
    </location>
</feature>
<feature type="active site" description="Nucleophile" evidence="4 5">
    <location>
        <position position="328"/>
    </location>
</feature>
<feature type="binding site" evidence="1">
    <location>
        <position position="201"/>
    </location>
    <ligand>
        <name>NAD(+)</name>
        <dbReference type="ChEBI" id="CHEBI:57540"/>
    </ligand>
</feature>
<feature type="binding site" evidence="1">
    <location>
        <position position="201"/>
    </location>
    <ligand>
        <name>substrate</name>
    </ligand>
</feature>
<feature type="binding site" evidence="1">
    <location>
        <begin position="216"/>
        <end position="219"/>
    </location>
    <ligand>
        <name>NAD(+)</name>
        <dbReference type="ChEBI" id="CHEBI:57540"/>
    </ligand>
</feature>
<feature type="binding site" evidence="1">
    <location>
        <begin position="272"/>
        <end position="277"/>
    </location>
    <ligand>
        <name>NAD(+)</name>
        <dbReference type="ChEBI" id="CHEBI:57540"/>
    </ligand>
</feature>
<feature type="binding site" evidence="1">
    <location>
        <position position="322"/>
    </location>
    <ligand>
        <name>substrate</name>
    </ligand>
</feature>
<feature type="binding site" evidence="1">
    <location>
        <position position="486"/>
    </location>
    <ligand>
        <name>substrate</name>
    </ligand>
</feature>
<feature type="site" description="Transition state stabilizer" evidence="1">
    <location>
        <position position="193"/>
    </location>
</feature>
<feature type="modified residue" description="N6-acetyllysine; alternate" evidence="2">
    <location>
        <position position="114"/>
    </location>
</feature>
<feature type="modified residue" description="N6-succinyllysine; alternate" evidence="3">
    <location>
        <position position="114"/>
    </location>
</feature>
<feature type="modified residue" description="N6-succinyllysine" evidence="3">
    <location>
        <position position="123"/>
    </location>
</feature>
<feature type="modified residue" description="N6-succinyllysine" evidence="3">
    <location>
        <position position="172"/>
    </location>
</feature>
<feature type="modified residue" description="N6-acetyllysine; alternate" evidence="3">
    <location>
        <position position="253"/>
    </location>
</feature>
<feature type="modified residue" description="N6-succinyllysine; alternate" evidence="3">
    <location>
        <position position="253"/>
    </location>
</feature>
<feature type="modified residue" description="N6-acetyllysine" evidence="3">
    <location>
        <position position="353"/>
    </location>
</feature>
<feature type="modified residue" description="N6-succinyllysine" evidence="3">
    <location>
        <position position="390"/>
    </location>
</feature>
<feature type="modified residue" description="N6-acetyllysine" evidence="3">
    <location>
        <position position="399"/>
    </location>
</feature>
<feature type="modified residue" description="Phosphoserine" evidence="2">
    <location>
        <position position="487"/>
    </location>
</feature>
<feature type="disulfide bond" description="In inhibited form" evidence="1">
    <location>
        <begin position="328"/>
        <end position="330"/>
    </location>
</feature>
<feature type="splice variant" id="VSP_001284" description="In isoform Short." evidence="8">
    <location>
        <begin position="107"/>
        <end position="134"/>
    </location>
</feature>
<evidence type="ECO:0000250" key="1"/>
<evidence type="ECO:0000250" key="2">
    <source>
        <dbReference type="UniProtKB" id="P51649"/>
    </source>
</evidence>
<evidence type="ECO:0000250" key="3">
    <source>
        <dbReference type="UniProtKB" id="Q8BWF0"/>
    </source>
</evidence>
<evidence type="ECO:0000255" key="4">
    <source>
        <dbReference type="PROSITE-ProRule" id="PRU10007"/>
    </source>
</evidence>
<evidence type="ECO:0000255" key="5">
    <source>
        <dbReference type="PROSITE-ProRule" id="PRU10008"/>
    </source>
</evidence>
<evidence type="ECO:0000269" key="6">
    <source>
    </source>
</evidence>
<evidence type="ECO:0000269" key="7">
    <source ref="3"/>
</evidence>
<evidence type="ECO:0000303" key="8">
    <source>
    </source>
</evidence>
<evidence type="ECO:0000305" key="9"/>
<evidence type="ECO:0000305" key="10">
    <source>
    </source>
</evidence>
<comment type="function">
    <text evidence="1">Catalyzes one step in the degradation of the inhibitory neurotransmitter gamma-aminobutyric acid (GABA).</text>
</comment>
<comment type="catalytic activity">
    <reaction evidence="6">
        <text>succinate semialdehyde + NAD(+) + H2O = succinate + NADH + 2 H(+)</text>
        <dbReference type="Rhea" id="RHEA:13217"/>
        <dbReference type="ChEBI" id="CHEBI:15377"/>
        <dbReference type="ChEBI" id="CHEBI:15378"/>
        <dbReference type="ChEBI" id="CHEBI:30031"/>
        <dbReference type="ChEBI" id="CHEBI:57540"/>
        <dbReference type="ChEBI" id="CHEBI:57706"/>
        <dbReference type="ChEBI" id="CHEBI:57945"/>
        <dbReference type="EC" id="1.2.1.24"/>
    </reaction>
    <physiologicalReaction direction="left-to-right" evidence="10">
        <dbReference type="Rhea" id="RHEA:13218"/>
    </physiologicalReaction>
</comment>
<comment type="activity regulation">
    <text evidence="1">Redox-regulated. Inhibited under oxydizing conditions (By similarity).</text>
</comment>
<comment type="pathway">
    <text>Amino-acid degradation; 4-aminobutanoate degradation.</text>
</comment>
<comment type="subunit">
    <text evidence="1">Homotetramer.</text>
</comment>
<comment type="subcellular location">
    <subcellularLocation>
        <location evidence="1">Mitochondrion</location>
    </subcellularLocation>
</comment>
<comment type="alternative products">
    <event type="alternative splicing"/>
    <isoform>
        <id>P51650-1</id>
        <name evidence="8">Long</name>
        <sequence type="displayed"/>
    </isoform>
    <isoform>
        <id>P51650-2</id>
        <name evidence="8">Short</name>
        <sequence type="described" ref="VSP_001284"/>
    </isoform>
</comment>
<comment type="tissue specificity">
    <text evidence="6">Brain, pancreas, heart, liver, skeletal muscle, kidney. Lower in spleen, lung, kidney and testis.</text>
</comment>
<comment type="similarity">
    <text evidence="9">Belongs to the aldehyde dehydrogenase family.</text>
</comment>
<dbReference type="EC" id="1.2.1.24" evidence="6"/>
<dbReference type="EMBL" id="AABR03105019">
    <property type="status" value="NOT_ANNOTATED_CDS"/>
    <property type="molecule type" value="Genomic_DNA"/>
</dbReference>
<dbReference type="EMBL" id="L34821">
    <property type="protein sequence ID" value="AAA67058.1"/>
    <property type="molecule type" value="mRNA"/>
</dbReference>
<dbReference type="PIR" id="I61704">
    <property type="entry name" value="I61704"/>
</dbReference>
<dbReference type="SMR" id="P51650"/>
<dbReference type="FunCoup" id="P51650">
    <property type="interactions" value="1264"/>
</dbReference>
<dbReference type="STRING" id="10116.ENSRNOP00000035601"/>
<dbReference type="iPTMnet" id="P51650"/>
<dbReference type="PhosphoSitePlus" id="P51650"/>
<dbReference type="jPOST" id="P51650"/>
<dbReference type="PaxDb" id="10116-ENSRNOP00000035601"/>
<dbReference type="PeptideAtlas" id="P51650"/>
<dbReference type="UCSC" id="RGD:621422">
    <molecule id="P51650-1"/>
    <property type="organism name" value="rat"/>
</dbReference>
<dbReference type="AGR" id="RGD:621422"/>
<dbReference type="RGD" id="621422">
    <property type="gene designation" value="Aldh5a1"/>
</dbReference>
<dbReference type="eggNOG" id="KOG2451">
    <property type="taxonomic scope" value="Eukaryota"/>
</dbReference>
<dbReference type="InParanoid" id="P51650"/>
<dbReference type="OrthoDB" id="310895at2759"/>
<dbReference type="PhylomeDB" id="P51650"/>
<dbReference type="BRENDA" id="1.2.1.3">
    <property type="organism ID" value="5301"/>
</dbReference>
<dbReference type="Reactome" id="R-RNO-916853">
    <property type="pathway name" value="Degradation of GABA"/>
</dbReference>
<dbReference type="SABIO-RK" id="P51650"/>
<dbReference type="UniPathway" id="UPA00733"/>
<dbReference type="PRO" id="PR:P51650"/>
<dbReference type="Proteomes" id="UP000002494">
    <property type="component" value="Unplaced"/>
</dbReference>
<dbReference type="GO" id="GO:0005739">
    <property type="term" value="C:mitochondrion"/>
    <property type="evidence" value="ECO:0000250"/>
    <property type="project" value="UniProtKB"/>
</dbReference>
<dbReference type="GO" id="GO:0045202">
    <property type="term" value="C:synapse"/>
    <property type="evidence" value="ECO:0007669"/>
    <property type="project" value="GOC"/>
</dbReference>
<dbReference type="GO" id="GO:0031406">
    <property type="term" value="F:carboxylic acid binding"/>
    <property type="evidence" value="ECO:0000353"/>
    <property type="project" value="RGD"/>
</dbReference>
<dbReference type="GO" id="GO:0042802">
    <property type="term" value="F:identical protein binding"/>
    <property type="evidence" value="ECO:0000266"/>
    <property type="project" value="RGD"/>
</dbReference>
<dbReference type="GO" id="GO:0051287">
    <property type="term" value="F:NAD binding"/>
    <property type="evidence" value="ECO:0000314"/>
    <property type="project" value="RGD"/>
</dbReference>
<dbReference type="GO" id="GO:0004777">
    <property type="term" value="F:succinate-semialdehyde dehydrogenase (NAD+) activity"/>
    <property type="evidence" value="ECO:0000314"/>
    <property type="project" value="UniProtKB"/>
</dbReference>
<dbReference type="GO" id="GO:0007417">
    <property type="term" value="P:central nervous system development"/>
    <property type="evidence" value="ECO:0000250"/>
    <property type="project" value="UniProtKB"/>
</dbReference>
<dbReference type="GO" id="GO:0009450">
    <property type="term" value="P:gamma-aminobutyric acid catabolic process"/>
    <property type="evidence" value="ECO:0000250"/>
    <property type="project" value="UniProtKB"/>
</dbReference>
<dbReference type="GO" id="GO:0009448">
    <property type="term" value="P:gamma-aminobutyric acid metabolic process"/>
    <property type="evidence" value="ECO:0000266"/>
    <property type="project" value="RGD"/>
</dbReference>
<dbReference type="GO" id="GO:0006536">
    <property type="term" value="P:glutamate metabolic process"/>
    <property type="evidence" value="ECO:0000266"/>
    <property type="project" value="RGD"/>
</dbReference>
<dbReference type="GO" id="GO:0009791">
    <property type="term" value="P:post-embryonic development"/>
    <property type="evidence" value="ECO:0000266"/>
    <property type="project" value="RGD"/>
</dbReference>
<dbReference type="GO" id="GO:0006105">
    <property type="term" value="P:succinate metabolic process"/>
    <property type="evidence" value="ECO:0000314"/>
    <property type="project" value="UniProtKB"/>
</dbReference>
<dbReference type="GO" id="GO:0051932">
    <property type="term" value="P:synaptic transmission, GABAergic"/>
    <property type="evidence" value="ECO:0000266"/>
    <property type="project" value="RGD"/>
</dbReference>
<dbReference type="CDD" id="cd07103">
    <property type="entry name" value="ALDH_F5_SSADH_GabD"/>
    <property type="match status" value="1"/>
</dbReference>
<dbReference type="FunFam" id="3.40.605.10:FF:000026">
    <property type="entry name" value="Aldehyde dehydrogenase, putative"/>
    <property type="match status" value="1"/>
</dbReference>
<dbReference type="FunFam" id="3.40.309.10:FF:000004">
    <property type="entry name" value="Succinate-semialdehyde dehydrogenase I"/>
    <property type="match status" value="1"/>
</dbReference>
<dbReference type="FunFam" id="3.40.605.10:FF:000096">
    <property type="entry name" value="Succinate-semialdehyde dehydrogenase, mitochondrial"/>
    <property type="match status" value="1"/>
</dbReference>
<dbReference type="Gene3D" id="3.40.605.10">
    <property type="entry name" value="Aldehyde Dehydrogenase, Chain A, domain 1"/>
    <property type="match status" value="1"/>
</dbReference>
<dbReference type="Gene3D" id="3.40.309.10">
    <property type="entry name" value="Aldehyde Dehydrogenase, Chain A, domain 2"/>
    <property type="match status" value="1"/>
</dbReference>
<dbReference type="InterPro" id="IPR016161">
    <property type="entry name" value="Ald_DH/histidinol_DH"/>
</dbReference>
<dbReference type="InterPro" id="IPR016163">
    <property type="entry name" value="Ald_DH_C"/>
</dbReference>
<dbReference type="InterPro" id="IPR016160">
    <property type="entry name" value="Ald_DH_CS_CYS"/>
</dbReference>
<dbReference type="InterPro" id="IPR029510">
    <property type="entry name" value="Ald_DH_CS_GLU"/>
</dbReference>
<dbReference type="InterPro" id="IPR016162">
    <property type="entry name" value="Ald_DH_N"/>
</dbReference>
<dbReference type="InterPro" id="IPR015590">
    <property type="entry name" value="Aldehyde_DH_dom"/>
</dbReference>
<dbReference type="InterPro" id="IPR050740">
    <property type="entry name" value="Aldehyde_DH_Superfamily"/>
</dbReference>
<dbReference type="InterPro" id="IPR010102">
    <property type="entry name" value="Succ_semiAld_DH"/>
</dbReference>
<dbReference type="NCBIfam" id="TIGR01780">
    <property type="entry name" value="SSADH"/>
    <property type="match status" value="1"/>
</dbReference>
<dbReference type="PANTHER" id="PTHR43353">
    <property type="entry name" value="SUCCINATE-SEMIALDEHYDE DEHYDROGENASE, MITOCHONDRIAL"/>
    <property type="match status" value="1"/>
</dbReference>
<dbReference type="PANTHER" id="PTHR43353:SF5">
    <property type="entry name" value="SUCCINATE-SEMIALDEHYDE DEHYDROGENASE, MITOCHONDRIAL"/>
    <property type="match status" value="1"/>
</dbReference>
<dbReference type="Pfam" id="PF00171">
    <property type="entry name" value="Aldedh"/>
    <property type="match status" value="1"/>
</dbReference>
<dbReference type="SUPFAM" id="SSF53720">
    <property type="entry name" value="ALDH-like"/>
    <property type="match status" value="1"/>
</dbReference>
<dbReference type="PROSITE" id="PS00070">
    <property type="entry name" value="ALDEHYDE_DEHYDR_CYS"/>
    <property type="match status" value="1"/>
</dbReference>
<dbReference type="PROSITE" id="PS00687">
    <property type="entry name" value="ALDEHYDE_DEHYDR_GLU"/>
    <property type="match status" value="1"/>
</dbReference>
<reference key="1">
    <citation type="journal article" date="2004" name="Nature">
        <title>Genome sequence of the Brown Norway rat yields insights into mammalian evolution.</title>
        <authorList>
            <person name="Gibbs R.A."/>
            <person name="Weinstock G.M."/>
            <person name="Metzker M.L."/>
            <person name="Muzny D.M."/>
            <person name="Sodergren E.J."/>
            <person name="Scherer S."/>
            <person name="Scott G."/>
            <person name="Steffen D."/>
            <person name="Worley K.C."/>
            <person name="Burch P.E."/>
            <person name="Okwuonu G."/>
            <person name="Hines S."/>
            <person name="Lewis L."/>
            <person name="Deramo C."/>
            <person name="Delgado O."/>
            <person name="Dugan-Rocha S."/>
            <person name="Miner G."/>
            <person name="Morgan M."/>
            <person name="Hawes A."/>
            <person name="Gill R."/>
            <person name="Holt R.A."/>
            <person name="Adams M.D."/>
            <person name="Amanatides P.G."/>
            <person name="Baden-Tillson H."/>
            <person name="Barnstead M."/>
            <person name="Chin S."/>
            <person name="Evans C.A."/>
            <person name="Ferriera S."/>
            <person name="Fosler C."/>
            <person name="Glodek A."/>
            <person name="Gu Z."/>
            <person name="Jennings D."/>
            <person name="Kraft C.L."/>
            <person name="Nguyen T."/>
            <person name="Pfannkoch C.M."/>
            <person name="Sitter C."/>
            <person name="Sutton G.G."/>
            <person name="Venter J.C."/>
            <person name="Woodage T."/>
            <person name="Smith D."/>
            <person name="Lee H.-M."/>
            <person name="Gustafson E."/>
            <person name="Cahill P."/>
            <person name="Kana A."/>
            <person name="Doucette-Stamm L."/>
            <person name="Weinstock K."/>
            <person name="Fechtel K."/>
            <person name="Weiss R.B."/>
            <person name="Dunn D.M."/>
            <person name="Green E.D."/>
            <person name="Blakesley R.W."/>
            <person name="Bouffard G.G."/>
            <person name="De Jong P.J."/>
            <person name="Osoegawa K."/>
            <person name="Zhu B."/>
            <person name="Marra M."/>
            <person name="Schein J."/>
            <person name="Bosdet I."/>
            <person name="Fjell C."/>
            <person name="Jones S."/>
            <person name="Krzywinski M."/>
            <person name="Mathewson C."/>
            <person name="Siddiqui A."/>
            <person name="Wye N."/>
            <person name="McPherson J."/>
            <person name="Zhao S."/>
            <person name="Fraser C.M."/>
            <person name="Shetty J."/>
            <person name="Shatsman S."/>
            <person name="Geer K."/>
            <person name="Chen Y."/>
            <person name="Abramzon S."/>
            <person name="Nierman W.C."/>
            <person name="Havlak P.H."/>
            <person name="Chen R."/>
            <person name="Durbin K.J."/>
            <person name="Egan A."/>
            <person name="Ren Y."/>
            <person name="Song X.-Z."/>
            <person name="Li B."/>
            <person name="Liu Y."/>
            <person name="Qin X."/>
            <person name="Cawley S."/>
            <person name="Cooney A.J."/>
            <person name="D'Souza L.M."/>
            <person name="Martin K."/>
            <person name="Wu J.Q."/>
            <person name="Gonzalez-Garay M.L."/>
            <person name="Jackson A.R."/>
            <person name="Kalafus K.J."/>
            <person name="McLeod M.P."/>
            <person name="Milosavljevic A."/>
            <person name="Virk D."/>
            <person name="Volkov A."/>
            <person name="Wheeler D.A."/>
            <person name="Zhang Z."/>
            <person name="Bailey J.A."/>
            <person name="Eichler E.E."/>
            <person name="Tuzun E."/>
            <person name="Birney E."/>
            <person name="Mongin E."/>
            <person name="Ureta-Vidal A."/>
            <person name="Woodwark C."/>
            <person name="Zdobnov E."/>
            <person name="Bork P."/>
            <person name="Suyama M."/>
            <person name="Torrents D."/>
            <person name="Alexandersson M."/>
            <person name="Trask B.J."/>
            <person name="Young J.M."/>
            <person name="Huang H."/>
            <person name="Wang H."/>
            <person name="Xing H."/>
            <person name="Daniels S."/>
            <person name="Gietzen D."/>
            <person name="Schmidt J."/>
            <person name="Stevens K."/>
            <person name="Vitt U."/>
            <person name="Wingrove J."/>
            <person name="Camara F."/>
            <person name="Mar Alba M."/>
            <person name="Abril J.F."/>
            <person name="Guigo R."/>
            <person name="Smit A."/>
            <person name="Dubchak I."/>
            <person name="Rubin E.M."/>
            <person name="Couronne O."/>
            <person name="Poliakov A."/>
            <person name="Huebner N."/>
            <person name="Ganten D."/>
            <person name="Goesele C."/>
            <person name="Hummel O."/>
            <person name="Kreitler T."/>
            <person name="Lee Y.-A."/>
            <person name="Monti J."/>
            <person name="Schulz H."/>
            <person name="Zimdahl H."/>
            <person name="Himmelbauer H."/>
            <person name="Lehrach H."/>
            <person name="Jacob H.J."/>
            <person name="Bromberg S."/>
            <person name="Gullings-Handley J."/>
            <person name="Jensen-Seaman M.I."/>
            <person name="Kwitek A.E."/>
            <person name="Lazar J."/>
            <person name="Pasko D."/>
            <person name="Tonellato P.J."/>
            <person name="Twigger S."/>
            <person name="Ponting C.P."/>
            <person name="Duarte J.M."/>
            <person name="Rice S."/>
            <person name="Goodstadt L."/>
            <person name="Beatson S.A."/>
            <person name="Emes R.D."/>
            <person name="Winter E.E."/>
            <person name="Webber C."/>
            <person name="Brandt P."/>
            <person name="Nyakatura G."/>
            <person name="Adetobi M."/>
            <person name="Chiaromonte F."/>
            <person name="Elnitski L."/>
            <person name="Eswara P."/>
            <person name="Hardison R.C."/>
            <person name="Hou M."/>
            <person name="Kolbe D."/>
            <person name="Makova K."/>
            <person name="Miller W."/>
            <person name="Nekrutenko A."/>
            <person name="Riemer C."/>
            <person name="Schwartz S."/>
            <person name="Taylor J."/>
            <person name="Yang S."/>
            <person name="Zhang Y."/>
            <person name="Lindpaintner K."/>
            <person name="Andrews T.D."/>
            <person name="Caccamo M."/>
            <person name="Clamp M."/>
            <person name="Clarke L."/>
            <person name="Curwen V."/>
            <person name="Durbin R.M."/>
            <person name="Eyras E."/>
            <person name="Searle S.M."/>
            <person name="Cooper G.M."/>
            <person name="Batzoglou S."/>
            <person name="Brudno M."/>
            <person name="Sidow A."/>
            <person name="Stone E.A."/>
            <person name="Payseur B.A."/>
            <person name="Bourque G."/>
            <person name="Lopez-Otin C."/>
            <person name="Puente X.S."/>
            <person name="Chakrabarti K."/>
            <person name="Chatterji S."/>
            <person name="Dewey C."/>
            <person name="Pachter L."/>
            <person name="Bray N."/>
            <person name="Yap V.B."/>
            <person name="Caspi A."/>
            <person name="Tesler G."/>
            <person name="Pevzner P.A."/>
            <person name="Haussler D."/>
            <person name="Roskin K.M."/>
            <person name="Baertsch R."/>
            <person name="Clawson H."/>
            <person name="Furey T.S."/>
            <person name="Hinrichs A.S."/>
            <person name="Karolchik D."/>
            <person name="Kent W.J."/>
            <person name="Rosenbloom K.R."/>
            <person name="Trumbower H."/>
            <person name="Weirauch M."/>
            <person name="Cooper D.N."/>
            <person name="Stenson P.D."/>
            <person name="Ma B."/>
            <person name="Brent M."/>
            <person name="Arumugam M."/>
            <person name="Shteynberg D."/>
            <person name="Copley R.R."/>
            <person name="Taylor M.S."/>
            <person name="Riethman H."/>
            <person name="Mudunuri U."/>
            <person name="Peterson J."/>
            <person name="Guyer M."/>
            <person name="Felsenfeld A."/>
            <person name="Old S."/>
            <person name="Mockrin S."/>
            <person name="Collins F.S."/>
        </authorList>
    </citation>
    <scope>NUCLEOTIDE SEQUENCE [LARGE SCALE GENOMIC DNA]</scope>
    <source>
        <strain>Brown Norway</strain>
    </source>
</reference>
<reference key="2">
    <citation type="journal article" date="1995" name="J. Biol. Chem.">
        <title>Molecular cloning of the mature NAD(+)-dependent succinic semialdehyde dehydrogenase from rat and human. cDNA isolation, evolutionary homology, and tissue expression.</title>
        <authorList>
            <person name="Chambliss K.L."/>
            <person name="Caudle D.L."/>
            <person name="Hinson D.D."/>
            <person name="Moomaw C.R."/>
            <person name="Slaughter C.A."/>
            <person name="Jakobs C."/>
            <person name="Gibson K.M."/>
        </authorList>
    </citation>
    <scope>NUCLEOTIDE SEQUENCE [MRNA] (ISOFORMS LONG AND SHORT)</scope>
    <scope>PROTEIN SEQUENCE OF 36-84; 92-101; 129-153; 162-172; 303-311; 419-425 AND 503-526</scope>
    <scope>CATALYTIC ACTIVITY</scope>
    <scope>TISSUE SPECIFICITY</scope>
    <source>
        <strain>Sprague-Dawley</strain>
        <tissue>Brain</tissue>
    </source>
</reference>
<reference key="3">
    <citation type="submission" date="2006-11" db="UniProtKB">
        <authorList>
            <person name="Lubec G."/>
            <person name="Afjehi-Sadat L."/>
        </authorList>
    </citation>
    <scope>PROTEIN SEQUENCE OF 36-48; 161-172 AND 401-418</scope>
    <scope>IDENTIFICATION BY MASS SPECTROMETRY</scope>
    <source>
        <strain>Sprague-Dawley</strain>
        <tissue>Spinal cord</tissue>
    </source>
</reference>
<sequence>MATCFLLRNFCAARPALRPPGRLLREPAGAQRRSYVGGPADLHADLLRGDSFVGGRWLPTPATFPVYDPASGAKLGTVADCGVPEARAAVRAAYDAFSSWKEISVKERSSLLRKWYDLMIQNKDELAKIITAESGKPLKEAQGEILYSAFFLEWFSEEARRVYGDIIYTSAKDKRGLVLKQPVGVASIITPWNFPSAMITRKVGAALAAGCTVVVKPAEDTPYSALALAQLANQAGIPPGVYNVIPCSRTKAKEVGEVLCTDPLVSKISFTGSTATGKILLHHAANSVKRVSMELGGLAPFIVFDSANVDQAVAGAMASKFRNAGQTCVCSNRFLVQRGIHDSFVTKFAEAMKKSLRVGNGFEEGTTQGPLINEKAVEKVEKHVNDAVAKGATVVTGGKRHQSGGNFFEPTLLSNVTRDMLCITEETFGPVAPVIKFDKEEEAVAIANAADVGLAGYFYSQDPAQIWRVAEQLEVGMVGVNEGLISSVECPFGGVKQSGLGREGSKYGIDEYLEVKYVCYGGL</sequence>
<gene>
    <name type="primary">Aldh5a1</name>
    <name type="synonym">Ssadh</name>
</gene>
<proteinExistence type="evidence at protein level"/>
<name>SSDH_RAT</name>
<accession>P51650</accession>
<keyword id="KW-0007">Acetylation</keyword>
<keyword id="KW-0025">Alternative splicing</keyword>
<keyword id="KW-0903">Direct protein sequencing</keyword>
<keyword id="KW-1015">Disulfide bond</keyword>
<keyword id="KW-0496">Mitochondrion</keyword>
<keyword id="KW-0520">NAD</keyword>
<keyword id="KW-0560">Oxidoreductase</keyword>
<keyword id="KW-0597">Phosphoprotein</keyword>
<keyword id="KW-1185">Reference proteome</keyword>
<keyword id="KW-0809">Transit peptide</keyword>
<protein>
    <recommendedName>
        <fullName>Succinate-semialdehyde dehydrogenase, mitochondrial</fullName>
        <shortName evidence="8">SSADH</shortName>
        <ecNumber evidence="6">1.2.1.24</ecNumber>
    </recommendedName>
    <alternativeName>
        <fullName>Aldehyde dehydrogenase family 5 member A1</fullName>
    </alternativeName>
    <alternativeName>
        <fullName>NAD(+)-dependent succinic semialdehyde dehydrogenase</fullName>
    </alternativeName>
</protein>